<accession>B7JV66</accession>
<evidence type="ECO:0000255" key="1">
    <source>
        <dbReference type="HAMAP-Rule" id="MF_01865"/>
    </source>
</evidence>
<evidence type="ECO:0000255" key="2">
    <source>
        <dbReference type="PROSITE-ProRule" id="PRU01266"/>
    </source>
</evidence>
<keyword id="KW-0004">4Fe-4S</keyword>
<keyword id="KW-0963">Cytoplasm</keyword>
<keyword id="KW-0408">Iron</keyword>
<keyword id="KW-0411">Iron-sulfur</keyword>
<keyword id="KW-0479">Metal-binding</keyword>
<keyword id="KW-1185">Reference proteome</keyword>
<keyword id="KW-0949">S-adenosyl-L-methionine</keyword>
<keyword id="KW-0808">Transferase</keyword>
<gene>
    <name evidence="1" type="primary">rimO</name>
    <name type="ordered locus">PCC8801_4276</name>
</gene>
<feature type="chain" id="PRO_0000374796" description="Ribosomal protein uS12 methylthiotransferase RimO">
    <location>
        <begin position="1"/>
        <end position="449"/>
    </location>
</feature>
<feature type="domain" description="MTTase N-terminal" evidence="1">
    <location>
        <begin position="5"/>
        <end position="116"/>
    </location>
</feature>
<feature type="domain" description="Radical SAM core" evidence="2">
    <location>
        <begin position="140"/>
        <end position="369"/>
    </location>
</feature>
<feature type="domain" description="TRAM" evidence="1">
    <location>
        <begin position="372"/>
        <end position="438"/>
    </location>
</feature>
<feature type="binding site" evidence="1">
    <location>
        <position position="14"/>
    </location>
    <ligand>
        <name>[4Fe-4S] cluster</name>
        <dbReference type="ChEBI" id="CHEBI:49883"/>
        <label>1</label>
    </ligand>
</feature>
<feature type="binding site" evidence="1">
    <location>
        <position position="50"/>
    </location>
    <ligand>
        <name>[4Fe-4S] cluster</name>
        <dbReference type="ChEBI" id="CHEBI:49883"/>
        <label>1</label>
    </ligand>
</feature>
<feature type="binding site" evidence="1">
    <location>
        <position position="79"/>
    </location>
    <ligand>
        <name>[4Fe-4S] cluster</name>
        <dbReference type="ChEBI" id="CHEBI:49883"/>
        <label>1</label>
    </ligand>
</feature>
<feature type="binding site" evidence="1">
    <location>
        <position position="154"/>
    </location>
    <ligand>
        <name>[4Fe-4S] cluster</name>
        <dbReference type="ChEBI" id="CHEBI:49883"/>
        <label>2</label>
        <note>4Fe-4S-S-AdoMet</note>
    </ligand>
</feature>
<feature type="binding site" evidence="1">
    <location>
        <position position="158"/>
    </location>
    <ligand>
        <name>[4Fe-4S] cluster</name>
        <dbReference type="ChEBI" id="CHEBI:49883"/>
        <label>2</label>
        <note>4Fe-4S-S-AdoMet</note>
    </ligand>
</feature>
<feature type="binding site" evidence="1">
    <location>
        <position position="161"/>
    </location>
    <ligand>
        <name>[4Fe-4S] cluster</name>
        <dbReference type="ChEBI" id="CHEBI:49883"/>
        <label>2</label>
        <note>4Fe-4S-S-AdoMet</note>
    </ligand>
</feature>
<organism>
    <name type="scientific">Rippkaea orientalis (strain PCC 8801 / RF-1)</name>
    <name type="common">Cyanothece sp. (strain PCC 8801)</name>
    <dbReference type="NCBI Taxonomy" id="41431"/>
    <lineage>
        <taxon>Bacteria</taxon>
        <taxon>Bacillati</taxon>
        <taxon>Cyanobacteriota</taxon>
        <taxon>Cyanophyceae</taxon>
        <taxon>Oscillatoriophycideae</taxon>
        <taxon>Chroococcales</taxon>
        <taxon>Aphanothecaceae</taxon>
        <taxon>Rippkaea</taxon>
        <taxon>Rippkaea orientalis</taxon>
    </lineage>
</organism>
<comment type="function">
    <text evidence="1">Catalyzes the methylthiolation of an aspartic acid residue of ribosomal protein uS12.</text>
</comment>
<comment type="catalytic activity">
    <reaction evidence="1">
        <text>L-aspartate(89)-[ribosomal protein uS12]-hydrogen + (sulfur carrier)-SH + AH2 + 2 S-adenosyl-L-methionine = 3-methylsulfanyl-L-aspartate(89)-[ribosomal protein uS12]-hydrogen + (sulfur carrier)-H + 5'-deoxyadenosine + L-methionine + A + S-adenosyl-L-homocysteine + 2 H(+)</text>
        <dbReference type="Rhea" id="RHEA:37087"/>
        <dbReference type="Rhea" id="RHEA-COMP:10460"/>
        <dbReference type="Rhea" id="RHEA-COMP:10461"/>
        <dbReference type="Rhea" id="RHEA-COMP:14737"/>
        <dbReference type="Rhea" id="RHEA-COMP:14739"/>
        <dbReference type="ChEBI" id="CHEBI:13193"/>
        <dbReference type="ChEBI" id="CHEBI:15378"/>
        <dbReference type="ChEBI" id="CHEBI:17319"/>
        <dbReference type="ChEBI" id="CHEBI:17499"/>
        <dbReference type="ChEBI" id="CHEBI:29917"/>
        <dbReference type="ChEBI" id="CHEBI:29961"/>
        <dbReference type="ChEBI" id="CHEBI:57844"/>
        <dbReference type="ChEBI" id="CHEBI:57856"/>
        <dbReference type="ChEBI" id="CHEBI:59789"/>
        <dbReference type="ChEBI" id="CHEBI:64428"/>
        <dbReference type="ChEBI" id="CHEBI:73599"/>
        <dbReference type="EC" id="2.8.4.4"/>
    </reaction>
</comment>
<comment type="cofactor">
    <cofactor evidence="1">
        <name>[4Fe-4S] cluster</name>
        <dbReference type="ChEBI" id="CHEBI:49883"/>
    </cofactor>
    <text evidence="1">Binds 2 [4Fe-4S] clusters. One cluster is coordinated with 3 cysteines and an exchangeable S-adenosyl-L-methionine.</text>
</comment>
<comment type="subcellular location">
    <subcellularLocation>
        <location evidence="1">Cytoplasm</location>
    </subcellularLocation>
</comment>
<comment type="similarity">
    <text evidence="1">Belongs to the methylthiotransferase family. RimO subfamily.</text>
</comment>
<sequence length="449" mass="50278">MGNKPTIAISHLGCEKNRIDSEHMLGLLAEAGYQIDGNEELADYVIVNTCSFIQEARQESVRTLVELAEANKKIIISGCMAQHFQEELLEELPEAVAIVGTGDYQTIVDVVQRVENGERVKAISTTPTFIADESIPRYRTTTEGVAYLRVAEGCDYRCAFCIIPHLRGNQRSRSIESIVTEAQQLADQGVQELILISQITTNYGLDLYGEPKLAELLRELGKVDIPWVRIHYAYPTGLTSPIIAAIRETPNVLPYLDLPLQHSHPQILKTMNRPWQGQVNDSIIERIKEAIPEAVLRTTFIVGFPGETEEHFDHLVNFVQRHEFDHVGVFTFSAEEETPAYQMSPQVPPDIAQERRNLLMEVQQPISIKKNQNCIGQTVPVLIEQENPQTGQLIGRSPRFAPEVDGLVYVQGEAPLNTIVPVQITHADVYDLYGKTNLKNDTAFGETLN</sequence>
<protein>
    <recommendedName>
        <fullName evidence="1">Ribosomal protein uS12 methylthiotransferase RimO</fullName>
        <shortName evidence="1">uS12 MTTase</shortName>
        <shortName evidence="1">uS12 methylthiotransferase</shortName>
        <ecNumber evidence="1">2.8.4.4</ecNumber>
    </recommendedName>
    <alternativeName>
        <fullName evidence="1">Ribosomal protein uS12 (aspartate-C(3))-methylthiotransferase</fullName>
    </alternativeName>
    <alternativeName>
        <fullName evidence="1">Ribosome maturation factor RimO</fullName>
    </alternativeName>
</protein>
<reference key="1">
    <citation type="journal article" date="2011" name="MBio">
        <title>Novel metabolic attributes of the genus Cyanothece, comprising a group of unicellular nitrogen-fixing Cyanobacteria.</title>
        <authorList>
            <person name="Bandyopadhyay A."/>
            <person name="Elvitigala T."/>
            <person name="Welsh E."/>
            <person name="Stockel J."/>
            <person name="Liberton M."/>
            <person name="Min H."/>
            <person name="Sherman L.A."/>
            <person name="Pakrasi H.B."/>
        </authorList>
    </citation>
    <scope>NUCLEOTIDE SEQUENCE [LARGE SCALE GENOMIC DNA]</scope>
    <source>
        <strain>PCC 8801 / RF-1</strain>
    </source>
</reference>
<name>RIMO_RIPO1</name>
<proteinExistence type="inferred from homology"/>
<dbReference type="EC" id="2.8.4.4" evidence="1"/>
<dbReference type="EMBL" id="CP001287">
    <property type="protein sequence ID" value="ACK68199.1"/>
    <property type="molecule type" value="Genomic_DNA"/>
</dbReference>
<dbReference type="RefSeq" id="WP_015957350.1">
    <property type="nucleotide sequence ID" value="NC_011726.1"/>
</dbReference>
<dbReference type="SMR" id="B7JV66"/>
<dbReference type="STRING" id="41431.PCC8801_4276"/>
<dbReference type="KEGG" id="cyp:PCC8801_4276"/>
<dbReference type="eggNOG" id="COG0621">
    <property type="taxonomic scope" value="Bacteria"/>
</dbReference>
<dbReference type="HOGENOM" id="CLU_018697_0_1_3"/>
<dbReference type="OrthoDB" id="9805215at2"/>
<dbReference type="Proteomes" id="UP000008204">
    <property type="component" value="Chromosome"/>
</dbReference>
<dbReference type="GO" id="GO:0005829">
    <property type="term" value="C:cytosol"/>
    <property type="evidence" value="ECO:0007669"/>
    <property type="project" value="TreeGrafter"/>
</dbReference>
<dbReference type="GO" id="GO:0051539">
    <property type="term" value="F:4 iron, 4 sulfur cluster binding"/>
    <property type="evidence" value="ECO:0007669"/>
    <property type="project" value="UniProtKB-UniRule"/>
</dbReference>
<dbReference type="GO" id="GO:0035599">
    <property type="term" value="F:aspartic acid methylthiotransferase activity"/>
    <property type="evidence" value="ECO:0007669"/>
    <property type="project" value="TreeGrafter"/>
</dbReference>
<dbReference type="GO" id="GO:0046872">
    <property type="term" value="F:metal ion binding"/>
    <property type="evidence" value="ECO:0007669"/>
    <property type="project" value="UniProtKB-KW"/>
</dbReference>
<dbReference type="GO" id="GO:0103039">
    <property type="term" value="F:protein methylthiotransferase activity"/>
    <property type="evidence" value="ECO:0007669"/>
    <property type="project" value="UniProtKB-EC"/>
</dbReference>
<dbReference type="GO" id="GO:0006400">
    <property type="term" value="P:tRNA modification"/>
    <property type="evidence" value="ECO:0007669"/>
    <property type="project" value="InterPro"/>
</dbReference>
<dbReference type="CDD" id="cd01335">
    <property type="entry name" value="Radical_SAM"/>
    <property type="match status" value="1"/>
</dbReference>
<dbReference type="FunFam" id="3.40.50.12160:FF:000002">
    <property type="entry name" value="Ribosomal protein S12 methylthiotransferase RimO"/>
    <property type="match status" value="1"/>
</dbReference>
<dbReference type="FunFam" id="3.80.30.20:FF:000001">
    <property type="entry name" value="tRNA-2-methylthio-N(6)-dimethylallyladenosine synthase 2"/>
    <property type="match status" value="1"/>
</dbReference>
<dbReference type="Gene3D" id="3.40.50.12160">
    <property type="entry name" value="Methylthiotransferase, N-terminal domain"/>
    <property type="match status" value="1"/>
</dbReference>
<dbReference type="Gene3D" id="2.40.50.140">
    <property type="entry name" value="Nucleic acid-binding proteins"/>
    <property type="match status" value="1"/>
</dbReference>
<dbReference type="Gene3D" id="3.80.30.20">
    <property type="entry name" value="tm_1862 like domain"/>
    <property type="match status" value="1"/>
</dbReference>
<dbReference type="HAMAP" id="MF_01865">
    <property type="entry name" value="MTTase_RimO"/>
    <property type="match status" value="1"/>
</dbReference>
<dbReference type="InterPro" id="IPR006638">
    <property type="entry name" value="Elp3/MiaA/NifB-like_rSAM"/>
</dbReference>
<dbReference type="InterPro" id="IPR005839">
    <property type="entry name" value="Methylthiotransferase"/>
</dbReference>
<dbReference type="InterPro" id="IPR020612">
    <property type="entry name" value="Methylthiotransferase_CS"/>
</dbReference>
<dbReference type="InterPro" id="IPR013848">
    <property type="entry name" value="Methylthiotransferase_N"/>
</dbReference>
<dbReference type="InterPro" id="IPR038135">
    <property type="entry name" value="Methylthiotransferase_N_sf"/>
</dbReference>
<dbReference type="InterPro" id="IPR012340">
    <property type="entry name" value="NA-bd_OB-fold"/>
</dbReference>
<dbReference type="InterPro" id="IPR005840">
    <property type="entry name" value="Ribosomal_uS12_MeSTrfase_RimO"/>
</dbReference>
<dbReference type="InterPro" id="IPR007197">
    <property type="entry name" value="rSAM"/>
</dbReference>
<dbReference type="InterPro" id="IPR023404">
    <property type="entry name" value="rSAM_horseshoe"/>
</dbReference>
<dbReference type="InterPro" id="IPR002792">
    <property type="entry name" value="TRAM_dom"/>
</dbReference>
<dbReference type="NCBIfam" id="TIGR01125">
    <property type="entry name" value="30S ribosomal protein S12 methylthiotransferase RimO"/>
    <property type="match status" value="1"/>
</dbReference>
<dbReference type="NCBIfam" id="TIGR00089">
    <property type="entry name" value="MiaB/RimO family radical SAM methylthiotransferase"/>
    <property type="match status" value="1"/>
</dbReference>
<dbReference type="PANTHER" id="PTHR43837">
    <property type="entry name" value="RIBOSOMAL PROTEIN S12 METHYLTHIOTRANSFERASE RIMO"/>
    <property type="match status" value="1"/>
</dbReference>
<dbReference type="PANTHER" id="PTHR43837:SF1">
    <property type="entry name" value="RIBOSOMAL PROTEIN US12 METHYLTHIOTRANSFERASE RIMO"/>
    <property type="match status" value="1"/>
</dbReference>
<dbReference type="Pfam" id="PF04055">
    <property type="entry name" value="Radical_SAM"/>
    <property type="match status" value="1"/>
</dbReference>
<dbReference type="Pfam" id="PF18693">
    <property type="entry name" value="TRAM_2"/>
    <property type="match status" value="1"/>
</dbReference>
<dbReference type="Pfam" id="PF00919">
    <property type="entry name" value="UPF0004"/>
    <property type="match status" value="1"/>
</dbReference>
<dbReference type="SFLD" id="SFLDG01082">
    <property type="entry name" value="B12-binding_domain_containing"/>
    <property type="match status" value="1"/>
</dbReference>
<dbReference type="SFLD" id="SFLDS00029">
    <property type="entry name" value="Radical_SAM"/>
    <property type="match status" value="1"/>
</dbReference>
<dbReference type="SFLD" id="SFLDF00274">
    <property type="entry name" value="ribosomal_protein_S12_methylth"/>
    <property type="match status" value="1"/>
</dbReference>
<dbReference type="SMART" id="SM00729">
    <property type="entry name" value="Elp3"/>
    <property type="match status" value="1"/>
</dbReference>
<dbReference type="SUPFAM" id="SSF102114">
    <property type="entry name" value="Radical SAM enzymes"/>
    <property type="match status" value="1"/>
</dbReference>
<dbReference type="PROSITE" id="PS51449">
    <property type="entry name" value="MTTASE_N"/>
    <property type="match status" value="1"/>
</dbReference>
<dbReference type="PROSITE" id="PS01278">
    <property type="entry name" value="MTTASE_RADICAL"/>
    <property type="match status" value="1"/>
</dbReference>
<dbReference type="PROSITE" id="PS51918">
    <property type="entry name" value="RADICAL_SAM"/>
    <property type="match status" value="1"/>
</dbReference>
<dbReference type="PROSITE" id="PS50926">
    <property type="entry name" value="TRAM"/>
    <property type="match status" value="1"/>
</dbReference>